<comment type="function">
    <text evidence="1">Component of the ribosome, a large ribonucleoprotein complex responsible for the synthesis of proteins in the cell. The small ribosomal subunit (SSU) binds messenger RNAs (mRNAs) and translates the encoded message by selecting cognate aminoacyl-transfer RNA (tRNA) molecules. The large subunit (LSU) contains the ribosomal catalytic site termed the peptidyl transferase center (PTC), which catalyzes the formation of peptide bonds, thereby polymerizing the amino acids delivered by tRNAs into a polypeptide chain. The nascent polypeptides leave the ribosome through a tunnel in the LSU and interact with protein factors that function in enzymatic processing, targeting, and the membrane insertion of nascent chains at the exit of the ribosomal tunnel.</text>
</comment>
<comment type="subunit">
    <text evidence="1">Component of the large ribosomal subunit.</text>
</comment>
<comment type="subcellular location">
    <subcellularLocation>
        <location evidence="1">Nucleus</location>
    </subcellularLocation>
    <subcellularLocation>
        <location evidence="1">Cytoplasm</location>
    </subcellularLocation>
</comment>
<comment type="similarity">
    <text evidence="2">Belongs to the universal ribosomal protein uL5 family.</text>
</comment>
<organism>
    <name type="scientific">Ictalurus punctatus</name>
    <name type="common">Channel catfish</name>
    <name type="synonym">Silurus punctatus</name>
    <dbReference type="NCBI Taxonomy" id="7998"/>
    <lineage>
        <taxon>Eukaryota</taxon>
        <taxon>Metazoa</taxon>
        <taxon>Chordata</taxon>
        <taxon>Craniata</taxon>
        <taxon>Vertebrata</taxon>
        <taxon>Euteleostomi</taxon>
        <taxon>Actinopterygii</taxon>
        <taxon>Neopterygii</taxon>
        <taxon>Teleostei</taxon>
        <taxon>Ostariophysi</taxon>
        <taxon>Siluriformes</taxon>
        <taxon>Ictaluridae</taxon>
        <taxon>Ictalurus</taxon>
    </lineage>
</organism>
<evidence type="ECO:0000250" key="1">
    <source>
        <dbReference type="UniProtKB" id="P0C0W9"/>
    </source>
</evidence>
<evidence type="ECO:0000305" key="2"/>
<keyword id="KW-0963">Cytoplasm</keyword>
<keyword id="KW-0539">Nucleus</keyword>
<keyword id="KW-0687">Ribonucleoprotein</keyword>
<keyword id="KW-0689">Ribosomal protein</keyword>
<keyword id="KW-0694">RNA-binding</keyword>
<keyword id="KW-0699">rRNA-binding</keyword>
<feature type="chain" id="PRO_0000125086" description="Large ribosomal subunit protein uL5">
    <location>
        <begin position="1"/>
        <end position="178"/>
    </location>
</feature>
<name>RL11_ICTPU</name>
<sequence>MADQGEKKENPMRELRIRKLCLNICVGESGDRLTRAAKVLEQLTGQTPVFSKARYTVRSFGIRRNEKIAVHCTVRGAKAEEILEKGLKVREYELRKNNFSDSGNFGFGIQEHIDLGIKYDPSIGIYGLDFYVVLGRPGFSIADKKRKRGRIGFKHRIRKREAMRWFQQKYDGVILPGK</sequence>
<gene>
    <name type="primary">rpl11</name>
</gene>
<protein>
    <recommendedName>
        <fullName evidence="2">Large ribosomal subunit protein uL5</fullName>
    </recommendedName>
    <alternativeName>
        <fullName>60S ribosomal protein L11</fullName>
    </alternativeName>
</protein>
<reference key="1">
    <citation type="journal article" date="2003" name="Gene">
        <title>Translational machinery of channel catfish: II. Complementary DNA and expression of the complete set of 47 60S ribosomal proteins.</title>
        <authorList>
            <person name="Patterson A.P."/>
            <person name="Karsi A."/>
            <person name="Feng J."/>
            <person name="Liu Z.J."/>
        </authorList>
    </citation>
    <scope>NUCLEOTIDE SEQUENCE [MRNA]</scope>
</reference>
<proteinExistence type="evidence at transcript level"/>
<accession>Q90YV7</accession>
<dbReference type="EMBL" id="AF401565">
    <property type="protein sequence ID" value="AAK95137.1"/>
    <property type="molecule type" value="mRNA"/>
</dbReference>
<dbReference type="RefSeq" id="NP_001187040.1">
    <property type="nucleotide sequence ID" value="NM_001200111.1"/>
</dbReference>
<dbReference type="SMR" id="Q90YV7"/>
<dbReference type="STRING" id="7998.ENSIPUP00000029352"/>
<dbReference type="GeneID" id="100304527"/>
<dbReference type="KEGG" id="ipu:100304527"/>
<dbReference type="CTD" id="6135"/>
<dbReference type="OrthoDB" id="1734943at2759"/>
<dbReference type="Proteomes" id="UP000221080">
    <property type="component" value="Chromosome 24"/>
</dbReference>
<dbReference type="GO" id="GO:0005737">
    <property type="term" value="C:cytoplasm"/>
    <property type="evidence" value="ECO:0000250"/>
    <property type="project" value="UniProtKB"/>
</dbReference>
<dbReference type="GO" id="GO:0005730">
    <property type="term" value="C:nucleolus"/>
    <property type="evidence" value="ECO:0000250"/>
    <property type="project" value="UniProtKB"/>
</dbReference>
<dbReference type="GO" id="GO:1990904">
    <property type="term" value="C:ribonucleoprotein complex"/>
    <property type="evidence" value="ECO:0007669"/>
    <property type="project" value="UniProtKB-KW"/>
</dbReference>
<dbReference type="GO" id="GO:0005840">
    <property type="term" value="C:ribosome"/>
    <property type="evidence" value="ECO:0007669"/>
    <property type="project" value="UniProtKB-KW"/>
</dbReference>
<dbReference type="GO" id="GO:0019843">
    <property type="term" value="F:rRNA binding"/>
    <property type="evidence" value="ECO:0007669"/>
    <property type="project" value="UniProtKB-KW"/>
</dbReference>
<dbReference type="GO" id="GO:0003735">
    <property type="term" value="F:structural constituent of ribosome"/>
    <property type="evidence" value="ECO:0007669"/>
    <property type="project" value="InterPro"/>
</dbReference>
<dbReference type="GO" id="GO:0034504">
    <property type="term" value="P:protein localization to nucleus"/>
    <property type="evidence" value="ECO:0000250"/>
    <property type="project" value="UniProtKB"/>
</dbReference>
<dbReference type="GO" id="GO:0006412">
    <property type="term" value="P:translation"/>
    <property type="evidence" value="ECO:0007669"/>
    <property type="project" value="InterPro"/>
</dbReference>
<dbReference type="FunFam" id="3.30.1440.10:FF:000002">
    <property type="entry name" value="60S ribosomal protein L11"/>
    <property type="match status" value="1"/>
</dbReference>
<dbReference type="Gene3D" id="3.30.1440.10">
    <property type="match status" value="1"/>
</dbReference>
<dbReference type="InterPro" id="IPR002132">
    <property type="entry name" value="Ribosomal_uL5"/>
</dbReference>
<dbReference type="InterPro" id="IPR031309">
    <property type="entry name" value="Ribosomal_uL5_C"/>
</dbReference>
<dbReference type="InterPro" id="IPR020929">
    <property type="entry name" value="Ribosomal_uL5_CS"/>
</dbReference>
<dbReference type="InterPro" id="IPR022803">
    <property type="entry name" value="Ribosomal_uL5_dom_sf"/>
</dbReference>
<dbReference type="InterPro" id="IPR031310">
    <property type="entry name" value="Ribosomal_uL5_N"/>
</dbReference>
<dbReference type="NCBIfam" id="NF003258">
    <property type="entry name" value="PRK04219.1"/>
    <property type="match status" value="1"/>
</dbReference>
<dbReference type="PANTHER" id="PTHR11994">
    <property type="entry name" value="60S RIBOSOMAL PROTEIN L11-RELATED"/>
    <property type="match status" value="1"/>
</dbReference>
<dbReference type="Pfam" id="PF00281">
    <property type="entry name" value="Ribosomal_L5"/>
    <property type="match status" value="1"/>
</dbReference>
<dbReference type="Pfam" id="PF00673">
    <property type="entry name" value="Ribosomal_L5_C"/>
    <property type="match status" value="1"/>
</dbReference>
<dbReference type="PIRSF" id="PIRSF002161">
    <property type="entry name" value="Ribosomal_L5"/>
    <property type="match status" value="1"/>
</dbReference>
<dbReference type="SUPFAM" id="SSF55282">
    <property type="entry name" value="RL5-like"/>
    <property type="match status" value="1"/>
</dbReference>
<dbReference type="PROSITE" id="PS00358">
    <property type="entry name" value="RIBOSOMAL_L5"/>
    <property type="match status" value="1"/>
</dbReference>